<dbReference type="EC" id="2.4.1.-" evidence="4"/>
<dbReference type="EMBL" id="FJ854500">
    <property type="protein sequence ID" value="ACZ44842.1"/>
    <property type="molecule type" value="mRNA"/>
</dbReference>
<dbReference type="SMR" id="D3UAG7"/>
<dbReference type="CAZy" id="GT1">
    <property type="family name" value="Glycosyltransferase Family 1"/>
</dbReference>
<dbReference type="GO" id="GO:0035251">
    <property type="term" value="F:UDP-glucosyltransferase activity"/>
    <property type="evidence" value="ECO:0007669"/>
    <property type="project" value="InterPro"/>
</dbReference>
<dbReference type="CDD" id="cd03784">
    <property type="entry name" value="GT1_Gtf-like"/>
    <property type="match status" value="1"/>
</dbReference>
<dbReference type="FunFam" id="3.40.50.2000:FF:000020">
    <property type="entry name" value="Glycosyltransferase"/>
    <property type="match status" value="1"/>
</dbReference>
<dbReference type="FunFam" id="3.40.50.2000:FF:000095">
    <property type="entry name" value="Glycosyltransferase"/>
    <property type="match status" value="1"/>
</dbReference>
<dbReference type="Gene3D" id="3.40.50.2000">
    <property type="entry name" value="Glycogen Phosphorylase B"/>
    <property type="match status" value="2"/>
</dbReference>
<dbReference type="InterPro" id="IPR050481">
    <property type="entry name" value="UDP-glycosyltransf_plant"/>
</dbReference>
<dbReference type="InterPro" id="IPR002213">
    <property type="entry name" value="UDP_glucos_trans"/>
</dbReference>
<dbReference type="InterPro" id="IPR035595">
    <property type="entry name" value="UDP_glycos_trans_CS"/>
</dbReference>
<dbReference type="PANTHER" id="PTHR48048">
    <property type="entry name" value="GLYCOSYLTRANSFERASE"/>
    <property type="match status" value="1"/>
</dbReference>
<dbReference type="PANTHER" id="PTHR48048:SF20">
    <property type="entry name" value="GLYCOSYLTRANSFERASE"/>
    <property type="match status" value="1"/>
</dbReference>
<dbReference type="Pfam" id="PF00201">
    <property type="entry name" value="UDPGT"/>
    <property type="match status" value="1"/>
</dbReference>
<dbReference type="SUPFAM" id="SSF53756">
    <property type="entry name" value="UDP-Glycosyltransferase/glycogen phosphorylase"/>
    <property type="match status" value="1"/>
</dbReference>
<dbReference type="PROSITE" id="PS00375">
    <property type="entry name" value="UDPGT"/>
    <property type="match status" value="1"/>
</dbReference>
<name>U88F3_PYRCO</name>
<gene>
    <name evidence="3" type="primary">UGT88F3</name>
</gene>
<organism>
    <name type="scientific">Pyrus communis</name>
    <name type="common">Pear</name>
    <name type="synonym">Pyrus domestica</name>
    <dbReference type="NCBI Taxonomy" id="23211"/>
    <lineage>
        <taxon>Eukaryota</taxon>
        <taxon>Viridiplantae</taxon>
        <taxon>Streptophyta</taxon>
        <taxon>Embryophyta</taxon>
        <taxon>Tracheophyta</taxon>
        <taxon>Spermatophyta</taxon>
        <taxon>Magnoliopsida</taxon>
        <taxon>eudicotyledons</taxon>
        <taxon>Gunneridae</taxon>
        <taxon>Pentapetalae</taxon>
        <taxon>rosids</taxon>
        <taxon>fabids</taxon>
        <taxon>Rosales</taxon>
        <taxon>Rosaceae</taxon>
        <taxon>Amygdaloideae</taxon>
        <taxon>Maleae</taxon>
        <taxon>Pyrus</taxon>
    </lineage>
</organism>
<reference key="1">
    <citation type="journal article" date="2010" name="Plant Sci.">
        <title>Cloning and heterologous expression of glycosyltransferases from Malus x domestica and Pyrus communis, which convert phloretin to phloretin 2'-O-glucoside (phloridzin).</title>
        <authorList>
            <person name="Gosch C."/>
            <person name="Halbwirth H."/>
            <person name="Schneider B."/>
            <person name="Holscher D."/>
            <person name="Stich K."/>
        </authorList>
    </citation>
    <scope>NUCLEOTIDE SEQUENCE [MRNA]</scope>
    <source>
        <strain>cv. Abbe Fetel</strain>
    </source>
</reference>
<sequence length="481" mass="53381">MGDVIVLYAAPGMGHIVSMVELGKLIVHRYGPHKFSITILYTCGSVVDTTSIPAYIRRISHSHPSISFCQFPRVTNKITPNISGAAIMFDFIRQNDPHVRRALQEISKSAAVRAFVIDLFCTSALPIGKEFNIPTYYFHTSGAAVLAAFLYFPKIDEQTTDSFKDLRDTVFEFPGWKSPLKAIHMVEPVLDRNDPAYSDMIYFCSHLPKSNGIVVNTFEELEPPTILQAIAGGLCVPDGPTPPVYYVGPLIDEEKELSNDAAAAEEEDCLSWLDKQPRRSVLFLCFGSRGSFPAVQLKEIANGLEASGQRFLWVVKKPPVEEKTKQVHGVDDFDLEAVLPEGFLERTADRGMVVKSWAPQVVVLKKESVGGFVTHCGWNSVLEAVVAGVPMIAWPLYAEQQMNRNVLVTDMEMAIGVEQRDEEDGFVNAEEVERRVRELMESEGGRLLRERCKKMGEMALAALGETGSSTRNLVNFVSSIT</sequence>
<proteinExistence type="evidence at transcript level"/>
<evidence type="ECO:0000250" key="1">
    <source>
        <dbReference type="UniProtKB" id="D3UAG3"/>
    </source>
</evidence>
<evidence type="ECO:0000250" key="2">
    <source>
        <dbReference type="UniProtKB" id="Q9M156"/>
    </source>
</evidence>
<evidence type="ECO:0000303" key="3">
    <source ref="1"/>
</evidence>
<evidence type="ECO:0000305" key="4"/>
<feature type="chain" id="PRO_0000434454" description="UDP-glycosyltransferase 88F3">
    <location>
        <begin position="1"/>
        <end position="481"/>
    </location>
</feature>
<feature type="binding site" evidence="2">
    <location>
        <position position="288"/>
    </location>
    <ligand>
        <name>UDP-alpha-D-glucose</name>
        <dbReference type="ChEBI" id="CHEBI:58885"/>
    </ligand>
</feature>
<feature type="binding site" evidence="2">
    <location>
        <begin position="357"/>
        <end position="358"/>
    </location>
    <ligand>
        <name>UDP-alpha-D-glucose</name>
        <dbReference type="ChEBI" id="CHEBI:58885"/>
    </ligand>
</feature>
<feature type="binding site" evidence="2">
    <location>
        <begin position="375"/>
        <end position="383"/>
    </location>
    <ligand>
        <name>UDP-alpha-D-glucose</name>
        <dbReference type="ChEBI" id="CHEBI:58885"/>
    </ligand>
</feature>
<feature type="binding site" evidence="2">
    <location>
        <begin position="397"/>
        <end position="400"/>
    </location>
    <ligand>
        <name>UDP-alpha-D-glucose</name>
        <dbReference type="ChEBI" id="CHEBI:58885"/>
    </ligand>
</feature>
<keyword id="KW-0328">Glycosyltransferase</keyword>
<keyword id="KW-0808">Transferase</keyword>
<accession>D3UAG7</accession>
<comment type="function">
    <text evidence="1">Glycosyltransferase that may possess chalcone and dihydrochalcone 2'-O-glucosyltransferase activity.</text>
</comment>
<comment type="similarity">
    <text evidence="4">Belongs to the UDP-glycosyltransferase family.</text>
</comment>
<protein>
    <recommendedName>
        <fullName evidence="3">UDP-glycosyltransferase 88F3</fullName>
        <ecNumber evidence="4">2.4.1.-</ecNumber>
    </recommendedName>
    <alternativeName>
        <fullName evidence="4">UDP-glucose:chalcone 2'-O-glucosyltransferase</fullName>
    </alternativeName>
</protein>